<name>TRI36_HUMAN</name>
<gene>
    <name type="primary">TRIM36</name>
    <name type="synonym">RBCC728</name>
    <name type="synonym">RNF98</name>
</gene>
<feature type="chain" id="PRO_0000056252" description="E3 ubiquitin-protein ligase TRIM36">
    <location>
        <begin position="1"/>
        <end position="728"/>
    </location>
</feature>
<feature type="domain" description="COS" evidence="7">
    <location>
        <begin position="356"/>
        <end position="413"/>
    </location>
</feature>
<feature type="domain" description="Fibronectin type-III" evidence="5">
    <location>
        <begin position="419"/>
        <end position="510"/>
    </location>
</feature>
<feature type="domain" description="B30.2/SPRY" evidence="6">
    <location>
        <begin position="508"/>
        <end position="720"/>
    </location>
</feature>
<feature type="zinc finger region" description="RING-type; degenerate" evidence="4">
    <location>
        <begin position="33"/>
        <end position="84"/>
    </location>
</feature>
<feature type="zinc finger region" description="B box-type 1" evidence="3">
    <location>
        <begin position="154"/>
        <end position="192"/>
    </location>
</feature>
<feature type="zinc finger region" description="B box-type 2" evidence="3">
    <location>
        <begin position="207"/>
        <end position="249"/>
    </location>
</feature>
<feature type="coiled-coil region" evidence="2">
    <location>
        <begin position="271"/>
        <end position="345"/>
    </location>
</feature>
<feature type="binding site" evidence="3">
    <location>
        <position position="212"/>
    </location>
    <ligand>
        <name>Zn(2+)</name>
        <dbReference type="ChEBI" id="CHEBI:29105"/>
    </ligand>
</feature>
<feature type="binding site" evidence="3">
    <location>
        <position position="215"/>
    </location>
    <ligand>
        <name>Zn(2+)</name>
        <dbReference type="ChEBI" id="CHEBI:29105"/>
    </ligand>
</feature>
<feature type="binding site" evidence="3">
    <location>
        <position position="235"/>
    </location>
    <ligand>
        <name>Zn(2+)</name>
        <dbReference type="ChEBI" id="CHEBI:29105"/>
    </ligand>
</feature>
<feature type="binding site" evidence="3">
    <location>
        <position position="241"/>
    </location>
    <ligand>
        <name>Zn(2+)</name>
        <dbReference type="ChEBI" id="CHEBI:29105"/>
    </ligand>
</feature>
<feature type="splice variant" id="VSP_053818" description="In isoform 4." evidence="13">
    <original>MSESGEMSEFGYIMELIAKGK</original>
    <variation>MEGDGSDSP</variation>
    <location>
        <begin position="1"/>
        <end position="21"/>
    </location>
</feature>
<feature type="splice variant" id="VSP_045791" description="In isoform 3." evidence="15">
    <original>VTIKNIERELICPACKELFTHPLILPCQHSICHKCVKELL</original>
    <variation>ASAMGLQQTHEHSRLTSKGGEARCPFEISEVGKQSLPRRT</variation>
    <location>
        <begin position="22"/>
        <end position="61"/>
    </location>
</feature>
<feature type="splice variant" id="VSP_043511" description="In isoform 2." evidence="14">
    <original>VTIKNIERELICPACKELFTHPLILPCQHSICHKCVKEL</original>
    <variation>MPDWRRGYRCRQGCGKTTELATATDFSQTGNKSGKHFKT</variation>
    <location>
        <begin position="22"/>
        <end position="60"/>
    </location>
</feature>
<feature type="splice variant" id="VSP_043512" description="In isoform 2." evidence="14">
    <location>
        <begin position="61"/>
        <end position="728"/>
    </location>
</feature>
<feature type="splice variant" id="VSP_045792" description="In isoform 3." evidence="15">
    <location>
        <begin position="62"/>
        <end position="728"/>
    </location>
</feature>
<feature type="sequence variant" id="VAR_023197" description="In dbSNP:rs79290430." evidence="9 10">
    <original>K</original>
    <variation>R</variation>
    <location>
        <position position="428"/>
    </location>
</feature>
<feature type="sequence variant" id="VAR_023198" description="In dbSNP:rs17137481." evidence="9">
    <original>N</original>
    <variation>S</variation>
    <location>
        <position position="456"/>
    </location>
</feature>
<feature type="sequence variant" id="VAR_079581" description="In ANPH1; decreases protein stability; leads to microtubules disruption; exhibits multipolar spindles; exhibits abnormal cytokinesis." evidence="11">
    <original>D</original>
    <variation>N</variation>
    <location>
        <position position="518"/>
    </location>
</feature>
<feature type="sequence variant" id="VAR_020490" description="In dbSNP:rs2974617." evidence="8 9 10 12">
    <original>D</original>
    <variation>N</variation>
    <location>
        <position position="678"/>
    </location>
</feature>
<feature type="sequence variant" id="VAR_057221" description="In dbSNP:rs3749745.">
    <original>Q</original>
    <variation>E</variation>
    <location>
        <position position="725"/>
    </location>
</feature>
<feature type="sequence conflict" description="In Ref. 2; BAH12340." evidence="16" ref="2">
    <original>R</original>
    <variation>G</variation>
    <location>
        <position position="313"/>
    </location>
</feature>
<feature type="strand" evidence="17">
    <location>
        <begin position="508"/>
        <end position="510"/>
    </location>
</feature>
<feature type="turn" evidence="17">
    <location>
        <begin position="525"/>
        <end position="527"/>
    </location>
</feature>
<feature type="strand" evidence="17">
    <location>
        <begin position="528"/>
        <end position="530"/>
    </location>
</feature>
<feature type="strand" evidence="17">
    <location>
        <begin position="534"/>
        <end position="539"/>
    </location>
</feature>
<feature type="helix" evidence="17">
    <location>
        <begin position="543"/>
        <end position="547"/>
    </location>
</feature>
<feature type="helix" evidence="17">
    <location>
        <begin position="548"/>
        <end position="551"/>
    </location>
</feature>
<feature type="strand" evidence="17">
    <location>
        <begin position="553"/>
        <end position="559"/>
    </location>
</feature>
<feature type="strand" evidence="17">
    <location>
        <begin position="561"/>
        <end position="567"/>
    </location>
</feature>
<feature type="strand" evidence="17">
    <location>
        <begin position="569"/>
        <end position="580"/>
    </location>
</feature>
<feature type="strand" evidence="17">
    <location>
        <begin position="585"/>
        <end position="593"/>
    </location>
</feature>
<feature type="helix" evidence="17">
    <location>
        <begin position="594"/>
        <end position="600"/>
    </location>
</feature>
<feature type="helix" evidence="17">
    <location>
        <begin position="604"/>
        <end position="607"/>
    </location>
</feature>
<feature type="strand" evidence="17">
    <location>
        <begin position="634"/>
        <end position="639"/>
    </location>
</feature>
<feature type="strand" evidence="17">
    <location>
        <begin position="642"/>
        <end position="644"/>
    </location>
</feature>
<feature type="strand" evidence="17">
    <location>
        <begin position="658"/>
        <end position="661"/>
    </location>
</feature>
<feature type="strand" evidence="17">
    <location>
        <begin position="664"/>
        <end position="671"/>
    </location>
</feature>
<feature type="turn" evidence="17">
    <location>
        <begin position="672"/>
        <end position="675"/>
    </location>
</feature>
<feature type="strand" evidence="17">
    <location>
        <begin position="676"/>
        <end position="681"/>
    </location>
</feature>
<feature type="turn" evidence="17">
    <location>
        <begin position="682"/>
        <end position="685"/>
    </location>
</feature>
<feature type="strand" evidence="17">
    <location>
        <begin position="686"/>
        <end position="692"/>
    </location>
</feature>
<feature type="strand" evidence="17">
    <location>
        <begin position="699"/>
        <end position="713"/>
    </location>
</feature>
<feature type="helix" evidence="17">
    <location>
        <begin position="717"/>
        <end position="728"/>
    </location>
</feature>
<organism>
    <name type="scientific">Homo sapiens</name>
    <name type="common">Human</name>
    <dbReference type="NCBI Taxonomy" id="9606"/>
    <lineage>
        <taxon>Eukaryota</taxon>
        <taxon>Metazoa</taxon>
        <taxon>Chordata</taxon>
        <taxon>Craniata</taxon>
        <taxon>Vertebrata</taxon>
        <taxon>Euteleostomi</taxon>
        <taxon>Mammalia</taxon>
        <taxon>Eutheria</taxon>
        <taxon>Euarchontoglires</taxon>
        <taxon>Primates</taxon>
        <taxon>Haplorrhini</taxon>
        <taxon>Catarrhini</taxon>
        <taxon>Hominidae</taxon>
        <taxon>Homo</taxon>
    </lineage>
</organism>
<proteinExistence type="evidence at protein level"/>
<accession>Q9NQ86</accession>
<accession>A1L3Z1</accession>
<accession>A6NDD0</accession>
<accession>B7Z3V4</accession>
<accession>B7ZAV7</accession>
<accession>E9PFI8</accession>
<accession>Q0P5Z9</accession>
<keyword id="KW-0002">3D-structure</keyword>
<keyword id="KW-0025">Alternative splicing</keyword>
<keyword id="KW-0175">Coiled coil</keyword>
<keyword id="KW-0963">Cytoplasm</keyword>
<keyword id="KW-0968">Cytoplasmic vesicle</keyword>
<keyword id="KW-0206">Cytoskeleton</keyword>
<keyword id="KW-0225">Disease variant</keyword>
<keyword id="KW-0479">Metal-binding</keyword>
<keyword id="KW-1267">Proteomics identification</keyword>
<keyword id="KW-1185">Reference proteome</keyword>
<keyword id="KW-0677">Repeat</keyword>
<keyword id="KW-0808">Transferase</keyword>
<keyword id="KW-0833">Ubl conjugation pathway</keyword>
<keyword id="KW-0862">Zinc</keyword>
<keyword id="KW-0863">Zinc-finger</keyword>
<comment type="function">
    <text evidence="1 11">E3 ubiquitin-protein ligase which mediates ubiquitination and subsequent proteasomal degradation of target proteins. Involved in chromosome segregation and cell cycle regulation (PubMed:28087737). May play a role in the acrosome reaction and fertilization.</text>
</comment>
<comment type="catalytic activity">
    <reaction evidence="1">
        <text>S-ubiquitinyl-[E2 ubiquitin-conjugating enzyme]-L-cysteine + [acceptor protein]-L-lysine = [E2 ubiquitin-conjugating enzyme]-L-cysteine + N(6)-ubiquitinyl-[acceptor protein]-L-lysine.</text>
        <dbReference type="EC" id="2.3.2.27"/>
    </reaction>
</comment>
<comment type="subunit">
    <text evidence="1">Interacts with CENPH.</text>
</comment>
<comment type="interaction">
    <interactant intactId="EBI-2341518">
        <id>Q9NQ86</id>
    </interactant>
    <interactant intactId="EBI-307461">
        <id>Q9Y297</id>
        <label>BTRC</label>
    </interactant>
    <organismsDiffer>false</organismsDiffer>
    <experiments>3</experiments>
</comment>
<comment type="interaction">
    <interactant intactId="EBI-2341518">
        <id>Q9NQ86</id>
    </interactant>
    <interactant intactId="EBI-73473">
        <id>Q14240</id>
        <label>EIF4A2</label>
    </interactant>
    <organismsDiffer>false</organismsDiffer>
    <experiments>3</experiments>
</comment>
<comment type="interaction">
    <interactant intactId="EBI-2341518">
        <id>Q9NQ86</id>
    </interactant>
    <interactant intactId="EBI-10232522">
        <id>Q14240-2</id>
        <label>EIF4A2</label>
    </interactant>
    <organismsDiffer>false</organismsDiffer>
    <experiments>3</experiments>
</comment>
<comment type="interaction">
    <interactant intactId="EBI-2341518">
        <id>Q9NQ86</id>
    </interactant>
    <interactant intactId="EBI-374781">
        <id>O76003</id>
        <label>GLRX3</label>
    </interactant>
    <organismsDiffer>false</organismsDiffer>
    <experiments>6</experiments>
</comment>
<comment type="interaction">
    <interactant intactId="EBI-2341518">
        <id>Q9NQ86</id>
    </interactant>
    <interactant intactId="EBI-970191">
        <id>Q14451</id>
        <label>GRB7</label>
    </interactant>
    <organismsDiffer>false</organismsDiffer>
    <experiments>3</experiments>
</comment>
<comment type="interaction">
    <interactant intactId="EBI-2341518">
        <id>Q9NQ86</id>
    </interactant>
    <interactant intactId="EBI-765817">
        <id>Q9Y228</id>
        <label>TRAF3IP3</label>
    </interactant>
    <organismsDiffer>false</organismsDiffer>
    <experiments>3</experiments>
</comment>
<comment type="interaction">
    <interactant intactId="EBI-2341518">
        <id>Q9NQ86</id>
    </interactant>
    <interactant intactId="EBI-2682299">
        <id>Q96NC0</id>
        <label>ZMAT2</label>
    </interactant>
    <organismsDiffer>false</organismsDiffer>
    <experiments>3</experiments>
</comment>
<comment type="interaction">
    <interactant intactId="EBI-2341518">
        <id>Q9NQ86</id>
    </interactant>
    <interactant intactId="EBI-740727">
        <id>Q8TAU3</id>
        <label>ZNF417</label>
    </interactant>
    <organismsDiffer>false</organismsDiffer>
    <experiments>3</experiments>
</comment>
<comment type="interaction">
    <interactant intactId="EBI-2341518">
        <id>Q9NQ86</id>
    </interactant>
    <interactant intactId="EBI-6427977">
        <id>Q96SQ5</id>
        <label>ZNF587</label>
    </interactant>
    <organismsDiffer>false</organismsDiffer>
    <experiments>3</experiments>
</comment>
<comment type="subcellular location">
    <subcellularLocation>
        <location evidence="11">Cytoplasm</location>
    </subcellularLocation>
    <subcellularLocation>
        <location evidence="1">Cytoplasmic vesicle</location>
        <location evidence="1">Secretory vesicle</location>
        <location evidence="1">Acrosome</location>
    </subcellularLocation>
    <subcellularLocation>
        <location evidence="1">Cytoplasm</location>
        <location evidence="1">Cytoskeleton</location>
    </subcellularLocation>
    <text evidence="1">Found in the acrosomal region of elongated spermatids and mature sperm.</text>
</comment>
<comment type="alternative products">
    <event type="alternative splicing"/>
    <isoform>
        <id>Q9NQ86-1</id>
        <name>1</name>
        <sequence type="displayed"/>
    </isoform>
    <isoform>
        <id>Q9NQ86-2</id>
        <name>2</name>
        <sequence type="described" ref="VSP_043511 VSP_043512"/>
    </isoform>
    <isoform>
        <id>Q9NQ86-3</id>
        <name>3</name>
        <sequence type="described" ref="VSP_045791 VSP_045792"/>
    </isoform>
    <isoform>
        <id>Q9NQ86-4</id>
        <name>4</name>
        <sequence type="described" ref="VSP_053818"/>
    </isoform>
</comment>
<comment type="tissue specificity">
    <text evidence="9 11">Highly expressed in testis, prostate and brain (PubMed:15145053). Weakly expressed in kidney, lung and heart (PubMed:15145053). Expressed in fetal tissues (PubMed:28087737).</text>
</comment>
<comment type="disease" evidence="11">
    <disease id="DI-05078">
        <name>Anencephaly 1</name>
        <acronym>ANPH1</acronym>
        <description>An extreme form of neural tube defect resulting in the absence of brain tissues, and death in utero or perinatally. Infants are born with intact spinal cords, cerebellums, and brainstems, but lack formation of neural structures above this level. The skull is only partially formed. ANPH1 inheritance is autosomal recessive.</description>
        <dbReference type="MIM" id="206500"/>
    </disease>
    <text>The disease is caused by variants affecting the gene represented in this entry.</text>
</comment>
<comment type="similarity">
    <text evidence="16">Belongs to the TRIM/RBCC family.</text>
</comment>
<protein>
    <recommendedName>
        <fullName>E3 ubiquitin-protein ligase TRIM36</fullName>
        <ecNumber evidence="1">2.3.2.27</ecNumber>
    </recommendedName>
    <alternativeName>
        <fullName>RING finger protein 98</fullName>
    </alternativeName>
    <alternativeName>
        <fullName evidence="16">RING-type E3 ubiquitin transferase TRIM36</fullName>
    </alternativeName>
    <alternativeName>
        <fullName>Tripartite motif-containing protein 36</fullName>
    </alternativeName>
    <alternativeName>
        <fullName>Zinc-binding protein Rbcc728</fullName>
    </alternativeName>
</protein>
<reference key="1">
    <citation type="journal article" date="2004" name="Gene">
        <title>Cloning and characterisation of the RBCC728/TRIM36 zinc-binding protein from the tumor suppressor gene region at chromosome 5q22.3.</title>
        <authorList>
            <person name="Balint I."/>
            <person name="Muller A."/>
            <person name="Nagy A."/>
            <person name="Kovacs G."/>
        </authorList>
    </citation>
    <scope>NUCLEOTIDE SEQUENCE [MRNA] (ISOFORM 1)</scope>
    <scope>SUBCELLULAR LOCATION</scope>
    <scope>TISSUE SPECIFICITY</scope>
    <scope>VARIANTS ARG-428; SER-456 AND ASN-678</scope>
    <source>
        <tissue>Brain</tissue>
    </source>
</reference>
<reference key="2">
    <citation type="journal article" date="2004" name="Nat. Genet.">
        <title>Complete sequencing and characterization of 21,243 full-length human cDNAs.</title>
        <authorList>
            <person name="Ota T."/>
            <person name="Suzuki Y."/>
            <person name="Nishikawa T."/>
            <person name="Otsuki T."/>
            <person name="Sugiyama T."/>
            <person name="Irie R."/>
            <person name="Wakamatsu A."/>
            <person name="Hayashi K."/>
            <person name="Sato H."/>
            <person name="Nagai K."/>
            <person name="Kimura K."/>
            <person name="Makita H."/>
            <person name="Sekine M."/>
            <person name="Obayashi M."/>
            <person name="Nishi T."/>
            <person name="Shibahara T."/>
            <person name="Tanaka T."/>
            <person name="Ishii S."/>
            <person name="Yamamoto J."/>
            <person name="Saito K."/>
            <person name="Kawai Y."/>
            <person name="Isono Y."/>
            <person name="Nakamura Y."/>
            <person name="Nagahari K."/>
            <person name="Murakami K."/>
            <person name="Yasuda T."/>
            <person name="Iwayanagi T."/>
            <person name="Wagatsuma M."/>
            <person name="Shiratori A."/>
            <person name="Sudo H."/>
            <person name="Hosoiri T."/>
            <person name="Kaku Y."/>
            <person name="Kodaira H."/>
            <person name="Kondo H."/>
            <person name="Sugawara M."/>
            <person name="Takahashi M."/>
            <person name="Kanda K."/>
            <person name="Yokoi T."/>
            <person name="Furuya T."/>
            <person name="Kikkawa E."/>
            <person name="Omura Y."/>
            <person name="Abe K."/>
            <person name="Kamihara K."/>
            <person name="Katsuta N."/>
            <person name="Sato K."/>
            <person name="Tanikawa M."/>
            <person name="Yamazaki M."/>
            <person name="Ninomiya K."/>
            <person name="Ishibashi T."/>
            <person name="Yamashita H."/>
            <person name="Murakawa K."/>
            <person name="Fujimori K."/>
            <person name="Tanai H."/>
            <person name="Kimata M."/>
            <person name="Watanabe M."/>
            <person name="Hiraoka S."/>
            <person name="Chiba Y."/>
            <person name="Ishida S."/>
            <person name="Ono Y."/>
            <person name="Takiguchi S."/>
            <person name="Watanabe S."/>
            <person name="Yosida M."/>
            <person name="Hotuta T."/>
            <person name="Kusano J."/>
            <person name="Kanehori K."/>
            <person name="Takahashi-Fujii A."/>
            <person name="Hara H."/>
            <person name="Tanase T.-O."/>
            <person name="Nomura Y."/>
            <person name="Togiya S."/>
            <person name="Komai F."/>
            <person name="Hara R."/>
            <person name="Takeuchi K."/>
            <person name="Arita M."/>
            <person name="Imose N."/>
            <person name="Musashino K."/>
            <person name="Yuuki H."/>
            <person name="Oshima A."/>
            <person name="Sasaki N."/>
            <person name="Aotsuka S."/>
            <person name="Yoshikawa Y."/>
            <person name="Matsunawa H."/>
            <person name="Ichihara T."/>
            <person name="Shiohata N."/>
            <person name="Sano S."/>
            <person name="Moriya S."/>
            <person name="Momiyama H."/>
            <person name="Satoh N."/>
            <person name="Takami S."/>
            <person name="Terashima Y."/>
            <person name="Suzuki O."/>
            <person name="Nakagawa S."/>
            <person name="Senoh A."/>
            <person name="Mizoguchi H."/>
            <person name="Goto Y."/>
            <person name="Shimizu F."/>
            <person name="Wakebe H."/>
            <person name="Hishigaki H."/>
            <person name="Watanabe T."/>
            <person name="Sugiyama A."/>
            <person name="Takemoto M."/>
            <person name="Kawakami B."/>
            <person name="Yamazaki M."/>
            <person name="Watanabe K."/>
            <person name="Kumagai A."/>
            <person name="Itakura S."/>
            <person name="Fukuzumi Y."/>
            <person name="Fujimori Y."/>
            <person name="Komiyama M."/>
            <person name="Tashiro H."/>
            <person name="Tanigami A."/>
            <person name="Fujiwara T."/>
            <person name="Ono T."/>
            <person name="Yamada K."/>
            <person name="Fujii Y."/>
            <person name="Ozaki K."/>
            <person name="Hirao M."/>
            <person name="Ohmori Y."/>
            <person name="Kawabata A."/>
            <person name="Hikiji T."/>
            <person name="Kobatake N."/>
            <person name="Inagaki H."/>
            <person name="Ikema Y."/>
            <person name="Okamoto S."/>
            <person name="Okitani R."/>
            <person name="Kawakami T."/>
            <person name="Noguchi S."/>
            <person name="Itoh T."/>
            <person name="Shigeta K."/>
            <person name="Senba T."/>
            <person name="Matsumura K."/>
            <person name="Nakajima Y."/>
            <person name="Mizuno T."/>
            <person name="Morinaga M."/>
            <person name="Sasaki M."/>
            <person name="Togashi T."/>
            <person name="Oyama M."/>
            <person name="Hata H."/>
            <person name="Watanabe M."/>
            <person name="Komatsu T."/>
            <person name="Mizushima-Sugano J."/>
            <person name="Satoh T."/>
            <person name="Shirai Y."/>
            <person name="Takahashi Y."/>
            <person name="Nakagawa K."/>
            <person name="Okumura K."/>
            <person name="Nagase T."/>
            <person name="Nomura N."/>
            <person name="Kikuchi H."/>
            <person name="Masuho Y."/>
            <person name="Yamashita R."/>
            <person name="Nakai K."/>
            <person name="Yada T."/>
            <person name="Nakamura Y."/>
            <person name="Ohara O."/>
            <person name="Isogai T."/>
            <person name="Sugano S."/>
        </authorList>
    </citation>
    <scope>NUCLEOTIDE SEQUENCE [LARGE SCALE MRNA] (ISOFORM 4)</scope>
    <scope>VARIANT ASN-678</scope>
    <source>
        <tissue>Testis</tissue>
        <tissue>Thalamus</tissue>
    </source>
</reference>
<reference key="3">
    <citation type="submission" date="2003-04" db="EMBL/GenBank/DDBJ databases">
        <title>Full-length cDNA libraries and normalization.</title>
        <authorList>
            <person name="Li W.B."/>
            <person name="Gruber C."/>
            <person name="Jessee J."/>
            <person name="Polayes D."/>
        </authorList>
    </citation>
    <scope>NUCLEOTIDE SEQUENCE [LARGE SCALE MRNA] (ISOFORM 3)</scope>
    <source>
        <tissue>Fetal brain</tissue>
    </source>
</reference>
<reference key="4">
    <citation type="journal article" date="2004" name="Nature">
        <title>The DNA sequence and comparative analysis of human chromosome 5.</title>
        <authorList>
            <person name="Schmutz J."/>
            <person name="Martin J."/>
            <person name="Terry A."/>
            <person name="Couronne O."/>
            <person name="Grimwood J."/>
            <person name="Lowry S."/>
            <person name="Gordon L.A."/>
            <person name="Scott D."/>
            <person name="Xie G."/>
            <person name="Huang W."/>
            <person name="Hellsten U."/>
            <person name="Tran-Gyamfi M."/>
            <person name="She X."/>
            <person name="Prabhakar S."/>
            <person name="Aerts A."/>
            <person name="Altherr M."/>
            <person name="Bajorek E."/>
            <person name="Black S."/>
            <person name="Branscomb E."/>
            <person name="Caoile C."/>
            <person name="Challacombe J.F."/>
            <person name="Chan Y.M."/>
            <person name="Denys M."/>
            <person name="Detter J.C."/>
            <person name="Escobar J."/>
            <person name="Flowers D."/>
            <person name="Fotopulos D."/>
            <person name="Glavina T."/>
            <person name="Gomez M."/>
            <person name="Gonzales E."/>
            <person name="Goodstein D."/>
            <person name="Grigoriev I."/>
            <person name="Groza M."/>
            <person name="Hammon N."/>
            <person name="Hawkins T."/>
            <person name="Haydu L."/>
            <person name="Israni S."/>
            <person name="Jett J."/>
            <person name="Kadner K."/>
            <person name="Kimball H."/>
            <person name="Kobayashi A."/>
            <person name="Lopez F."/>
            <person name="Lou Y."/>
            <person name="Martinez D."/>
            <person name="Medina C."/>
            <person name="Morgan J."/>
            <person name="Nandkeshwar R."/>
            <person name="Noonan J.P."/>
            <person name="Pitluck S."/>
            <person name="Pollard M."/>
            <person name="Predki P."/>
            <person name="Priest J."/>
            <person name="Ramirez L."/>
            <person name="Retterer J."/>
            <person name="Rodriguez A."/>
            <person name="Rogers S."/>
            <person name="Salamov A."/>
            <person name="Salazar A."/>
            <person name="Thayer N."/>
            <person name="Tice H."/>
            <person name="Tsai M."/>
            <person name="Ustaszewska A."/>
            <person name="Vo N."/>
            <person name="Wheeler J."/>
            <person name="Wu K."/>
            <person name="Yang J."/>
            <person name="Dickson M."/>
            <person name="Cheng J.-F."/>
            <person name="Eichler E.E."/>
            <person name="Olsen A."/>
            <person name="Pennacchio L.A."/>
            <person name="Rokhsar D.S."/>
            <person name="Richardson P."/>
            <person name="Lucas S.M."/>
            <person name="Myers R.M."/>
            <person name="Rubin E.M."/>
        </authorList>
    </citation>
    <scope>NUCLEOTIDE SEQUENCE [LARGE SCALE GENOMIC DNA]</scope>
</reference>
<reference key="5">
    <citation type="submission" date="2005-09" db="EMBL/GenBank/DDBJ databases">
        <authorList>
            <person name="Mural R.J."/>
            <person name="Istrail S."/>
            <person name="Sutton G.G."/>
            <person name="Florea L."/>
            <person name="Halpern A.L."/>
            <person name="Mobarry C.M."/>
            <person name="Lippert R."/>
            <person name="Walenz B."/>
            <person name="Shatkay H."/>
            <person name="Dew I."/>
            <person name="Miller J.R."/>
            <person name="Flanigan M.J."/>
            <person name="Edwards N.J."/>
            <person name="Bolanos R."/>
            <person name="Fasulo D."/>
            <person name="Halldorsson B.V."/>
            <person name="Hannenhalli S."/>
            <person name="Turner R."/>
            <person name="Yooseph S."/>
            <person name="Lu F."/>
            <person name="Nusskern D.R."/>
            <person name="Shue B.C."/>
            <person name="Zheng X.H."/>
            <person name="Zhong F."/>
            <person name="Delcher A.L."/>
            <person name="Huson D.H."/>
            <person name="Kravitz S.A."/>
            <person name="Mouchard L."/>
            <person name="Reinert K."/>
            <person name="Remington K.A."/>
            <person name="Clark A.G."/>
            <person name="Waterman M.S."/>
            <person name="Eichler E.E."/>
            <person name="Adams M.D."/>
            <person name="Hunkapiller M.W."/>
            <person name="Myers E.W."/>
            <person name="Venter J.C."/>
        </authorList>
    </citation>
    <scope>NUCLEOTIDE SEQUENCE [LARGE SCALE GENOMIC DNA]</scope>
    <scope>VARIANT ASN-678</scope>
</reference>
<reference key="6">
    <citation type="journal article" date="2004" name="Genome Res.">
        <title>The status, quality, and expansion of the NIH full-length cDNA project: the Mammalian Gene Collection (MGC).</title>
        <authorList>
            <consortium name="The MGC Project Team"/>
        </authorList>
    </citation>
    <scope>NUCLEOTIDE SEQUENCE [LARGE SCALE MRNA] (ISOFORMS 1 AND 2)</scope>
    <scope>VARIANTS ARG-428 AND ASN-678</scope>
    <source>
        <tissue>Brain</tissue>
    </source>
</reference>
<reference key="7">
    <citation type="journal article" date="2017" name="Hum. Mol. Genet.">
        <title>A homozygous mutation in TRIM36 causes autosomal recessive anencephaly in an Indian family.</title>
        <authorList>
            <person name="Singh N."/>
            <person name="Kumble Bhat V."/>
            <person name="Tiwari A."/>
            <person name="Kodaganur S.G."/>
            <person name="Tontanahal S.J."/>
            <person name="Sarda A."/>
            <person name="Malini K.V."/>
            <person name="Kumar A."/>
        </authorList>
    </citation>
    <scope>INVOLVEMENT IN ANPH1</scope>
    <scope>VARIANT ANPH1 ASN-518</scope>
    <scope>CHARACTERIZATION OF VARIANT ANPH1 ASN-518</scope>
    <scope>TISSUE SPECIFICITY</scope>
    <scope>SUBCELLULAR LOCATION</scope>
    <scope>FUNCTION</scope>
</reference>
<dbReference type="EC" id="2.3.2.27" evidence="1"/>
<dbReference type="EMBL" id="AJ272269">
    <property type="protein sequence ID" value="CAB94831.1"/>
    <property type="molecule type" value="mRNA"/>
</dbReference>
<dbReference type="EMBL" id="BX460627">
    <property type="status" value="NOT_ANNOTATED_CDS"/>
    <property type="molecule type" value="mRNA"/>
</dbReference>
<dbReference type="EMBL" id="AK316422">
    <property type="protein sequence ID" value="BAH14793.1"/>
    <property type="molecule type" value="mRNA"/>
</dbReference>
<dbReference type="EMBL" id="AK296389">
    <property type="protein sequence ID" value="BAH12340.1"/>
    <property type="molecule type" value="mRNA"/>
</dbReference>
<dbReference type="EMBL" id="AC008494">
    <property type="status" value="NOT_ANNOTATED_CDS"/>
    <property type="molecule type" value="Genomic_DNA"/>
</dbReference>
<dbReference type="EMBL" id="AC094104">
    <property type="status" value="NOT_ANNOTATED_CDS"/>
    <property type="molecule type" value="Genomic_DNA"/>
</dbReference>
<dbReference type="EMBL" id="CH471086">
    <property type="protein sequence ID" value="EAW48972.1"/>
    <property type="molecule type" value="Genomic_DNA"/>
</dbReference>
<dbReference type="EMBL" id="BC045164">
    <property type="protein sequence ID" value="AAH45164.1"/>
    <property type="molecule type" value="mRNA"/>
</dbReference>
<dbReference type="EMBL" id="BC046096">
    <property type="protein sequence ID" value="AAH46096.1"/>
    <property type="molecule type" value="mRNA"/>
</dbReference>
<dbReference type="EMBL" id="BC130334">
    <property type="protein sequence ID" value="AAI30335.1"/>
    <property type="molecule type" value="mRNA"/>
</dbReference>
<dbReference type="CCDS" id="CCDS34211.1">
    <molecule id="Q9NQ86-2"/>
</dbReference>
<dbReference type="CCDS" id="CCDS34212.1">
    <molecule id="Q9NQ86-3"/>
</dbReference>
<dbReference type="CCDS" id="CCDS4115.1">
    <molecule id="Q9NQ86-1"/>
</dbReference>
<dbReference type="CCDS" id="CCDS75287.1">
    <molecule id="Q9NQ86-4"/>
</dbReference>
<dbReference type="RefSeq" id="NP_001017397.1">
    <molecule id="Q9NQ86-2"/>
    <property type="nucleotide sequence ID" value="NM_001017397.2"/>
</dbReference>
<dbReference type="RefSeq" id="NP_001017398.1">
    <molecule id="Q9NQ86-3"/>
    <property type="nucleotide sequence ID" value="NM_001017398.2"/>
</dbReference>
<dbReference type="RefSeq" id="NP_001287681.1">
    <property type="nucleotide sequence ID" value="NM_001300752.1"/>
</dbReference>
<dbReference type="RefSeq" id="NP_001287688.1">
    <molecule id="Q9NQ86-4"/>
    <property type="nucleotide sequence ID" value="NM_001300759.2"/>
</dbReference>
<dbReference type="RefSeq" id="NP_061170.2">
    <molecule id="Q9NQ86-1"/>
    <property type="nucleotide sequence ID" value="NM_018700.4"/>
</dbReference>
<dbReference type="PDB" id="7QS4">
    <property type="method" value="X-ray"/>
    <property type="resolution" value="2.25 A"/>
    <property type="chains" value="A/B/C/D=507-728"/>
</dbReference>
<dbReference type="PDBsum" id="7QS4"/>
<dbReference type="SMR" id="Q9NQ86"/>
<dbReference type="BioGRID" id="120695">
    <property type="interactions" value="143"/>
</dbReference>
<dbReference type="FunCoup" id="Q9NQ86">
    <property type="interactions" value="1008"/>
</dbReference>
<dbReference type="IntAct" id="Q9NQ86">
    <property type="interactions" value="18"/>
</dbReference>
<dbReference type="MINT" id="Q9NQ86"/>
<dbReference type="STRING" id="9606.ENSP00000282369"/>
<dbReference type="iPTMnet" id="Q9NQ86"/>
<dbReference type="PhosphoSitePlus" id="Q9NQ86"/>
<dbReference type="BioMuta" id="TRIM36"/>
<dbReference type="DMDM" id="313104034"/>
<dbReference type="jPOST" id="Q9NQ86"/>
<dbReference type="MassIVE" id="Q9NQ86"/>
<dbReference type="PaxDb" id="9606-ENSP00000282369"/>
<dbReference type="PeptideAtlas" id="Q9NQ86"/>
<dbReference type="ProteomicsDB" id="20113"/>
<dbReference type="ProteomicsDB" id="82103">
    <molecule id="Q9NQ86-1"/>
</dbReference>
<dbReference type="Pumba" id="Q9NQ86"/>
<dbReference type="Antibodypedia" id="25412">
    <property type="antibodies" value="231 antibodies from 27 providers"/>
</dbReference>
<dbReference type="DNASU" id="55521"/>
<dbReference type="Ensembl" id="ENST00000282369.7">
    <molecule id="Q9NQ86-1"/>
    <property type="protein sequence ID" value="ENSP00000282369.3"/>
    <property type="gene ID" value="ENSG00000152503.10"/>
</dbReference>
<dbReference type="Ensembl" id="ENST00000379617.2">
    <molecule id="Q9NQ86-3"/>
    <property type="protein sequence ID" value="ENSP00000368937.2"/>
    <property type="gene ID" value="ENSG00000152503.10"/>
</dbReference>
<dbReference type="Ensembl" id="ENST00000379618.6">
    <molecule id="Q9NQ86-2"/>
    <property type="protein sequence ID" value="ENSP00000368938.2"/>
    <property type="gene ID" value="ENSG00000152503.10"/>
</dbReference>
<dbReference type="Ensembl" id="ENST00000513154.6">
    <molecule id="Q9NQ86-4"/>
    <property type="protein sequence ID" value="ENSP00000423934.1"/>
    <property type="gene ID" value="ENSG00000152503.10"/>
</dbReference>
<dbReference type="GeneID" id="55521"/>
<dbReference type="KEGG" id="hsa:55521"/>
<dbReference type="MANE-Select" id="ENST00000513154.6">
    <molecule id="Q9NQ86-4"/>
    <property type="protein sequence ID" value="ENSP00000423934.1"/>
    <property type="RefSeq nucleotide sequence ID" value="NM_001300759.2"/>
    <property type="RefSeq protein sequence ID" value="NP_001287688.1"/>
</dbReference>
<dbReference type="UCSC" id="uc003kqs.4">
    <molecule id="Q9NQ86-1"/>
    <property type="organism name" value="human"/>
</dbReference>
<dbReference type="AGR" id="HGNC:16280"/>
<dbReference type="CTD" id="55521"/>
<dbReference type="DisGeNET" id="55521"/>
<dbReference type="GeneCards" id="TRIM36"/>
<dbReference type="HGNC" id="HGNC:16280">
    <property type="gene designation" value="TRIM36"/>
</dbReference>
<dbReference type="HPA" id="ENSG00000152503">
    <property type="expression patterns" value="Group enriched (retina, testis)"/>
</dbReference>
<dbReference type="MalaCards" id="TRIM36"/>
<dbReference type="MIM" id="206500">
    <property type="type" value="phenotype"/>
</dbReference>
<dbReference type="MIM" id="609317">
    <property type="type" value="gene"/>
</dbReference>
<dbReference type="neXtProt" id="NX_Q9NQ86"/>
<dbReference type="OpenTargets" id="ENSG00000152503"/>
<dbReference type="PharmGKB" id="PA38111"/>
<dbReference type="VEuPathDB" id="HostDB:ENSG00000152503"/>
<dbReference type="eggNOG" id="KOG2177">
    <property type="taxonomic scope" value="Eukaryota"/>
</dbReference>
<dbReference type="GeneTree" id="ENSGT00940000158373"/>
<dbReference type="HOGENOM" id="CLU_013137_19_3_1"/>
<dbReference type="InParanoid" id="Q9NQ86"/>
<dbReference type="OMA" id="SFYDTEH"/>
<dbReference type="OrthoDB" id="10040278at2759"/>
<dbReference type="PAN-GO" id="Q9NQ86">
    <property type="GO annotations" value="4 GO annotations based on evolutionary models"/>
</dbReference>
<dbReference type="PhylomeDB" id="Q9NQ86"/>
<dbReference type="TreeFam" id="TF315216"/>
<dbReference type="PathwayCommons" id="Q9NQ86"/>
<dbReference type="Reactome" id="R-HSA-983168">
    <property type="pathway name" value="Antigen processing: Ubiquitination &amp; Proteasome degradation"/>
</dbReference>
<dbReference type="SignaLink" id="Q9NQ86"/>
<dbReference type="SIGNOR" id="Q9NQ86"/>
<dbReference type="BioGRID-ORCS" id="55521">
    <property type="hits" value="7 hits in 1176 CRISPR screens"/>
</dbReference>
<dbReference type="ChiTaRS" id="TRIM36">
    <property type="organism name" value="human"/>
</dbReference>
<dbReference type="GenomeRNAi" id="55521"/>
<dbReference type="Pharos" id="Q9NQ86">
    <property type="development level" value="Tbio"/>
</dbReference>
<dbReference type="PRO" id="PR:Q9NQ86"/>
<dbReference type="Proteomes" id="UP000005640">
    <property type="component" value="Chromosome 5"/>
</dbReference>
<dbReference type="RNAct" id="Q9NQ86">
    <property type="molecule type" value="protein"/>
</dbReference>
<dbReference type="Bgee" id="ENSG00000152503">
    <property type="expression patterns" value="Expressed in sperm and 153 other cell types or tissues"/>
</dbReference>
<dbReference type="ExpressionAtlas" id="Q9NQ86">
    <property type="expression patterns" value="baseline and differential"/>
</dbReference>
<dbReference type="GO" id="GO:0001669">
    <property type="term" value="C:acrosomal vesicle"/>
    <property type="evidence" value="ECO:0000318"/>
    <property type="project" value="GO_Central"/>
</dbReference>
<dbReference type="GO" id="GO:0005737">
    <property type="term" value="C:cytoplasm"/>
    <property type="evidence" value="ECO:0000314"/>
    <property type="project" value="UniProtKB"/>
</dbReference>
<dbReference type="GO" id="GO:0005856">
    <property type="term" value="C:cytoskeleton"/>
    <property type="evidence" value="ECO:0007669"/>
    <property type="project" value="UniProtKB-SubCell"/>
</dbReference>
<dbReference type="GO" id="GO:0005829">
    <property type="term" value="C:cytosol"/>
    <property type="evidence" value="ECO:0000314"/>
    <property type="project" value="HPA"/>
</dbReference>
<dbReference type="GO" id="GO:0005886">
    <property type="term" value="C:plasma membrane"/>
    <property type="evidence" value="ECO:0000314"/>
    <property type="project" value="HPA"/>
</dbReference>
<dbReference type="GO" id="GO:0043014">
    <property type="term" value="F:alpha-tubulin binding"/>
    <property type="evidence" value="ECO:0000250"/>
    <property type="project" value="UniProtKB"/>
</dbReference>
<dbReference type="GO" id="GO:0004842">
    <property type="term" value="F:ubiquitin-protein transferase activity"/>
    <property type="evidence" value="ECO:0000250"/>
    <property type="project" value="UniProtKB"/>
</dbReference>
<dbReference type="GO" id="GO:0008270">
    <property type="term" value="F:zinc ion binding"/>
    <property type="evidence" value="ECO:0007669"/>
    <property type="project" value="UniProtKB-KW"/>
</dbReference>
<dbReference type="GO" id="GO:0007340">
    <property type="term" value="P:acrosome reaction"/>
    <property type="evidence" value="ECO:0000318"/>
    <property type="project" value="GO_Central"/>
</dbReference>
<dbReference type="GO" id="GO:0000281">
    <property type="term" value="P:mitotic cytokinesis"/>
    <property type="evidence" value="ECO:0000315"/>
    <property type="project" value="UniProtKB"/>
</dbReference>
<dbReference type="GO" id="GO:0051726">
    <property type="term" value="P:regulation of cell cycle"/>
    <property type="evidence" value="ECO:0007669"/>
    <property type="project" value="Ensembl"/>
</dbReference>
<dbReference type="GO" id="GO:0070507">
    <property type="term" value="P:regulation of microtubule cytoskeleton organization"/>
    <property type="evidence" value="ECO:0000315"/>
    <property type="project" value="UniProtKB"/>
</dbReference>
<dbReference type="GO" id="GO:0007051">
    <property type="term" value="P:spindle organization"/>
    <property type="evidence" value="ECO:0000315"/>
    <property type="project" value="UniProtKB"/>
</dbReference>
<dbReference type="CDD" id="cd19848">
    <property type="entry name" value="Bbox1_TRIM36_C-I"/>
    <property type="match status" value="1"/>
</dbReference>
<dbReference type="CDD" id="cd19778">
    <property type="entry name" value="Bbox2_TRIM36_C-I"/>
    <property type="match status" value="1"/>
</dbReference>
<dbReference type="CDD" id="cd00063">
    <property type="entry name" value="FN3"/>
    <property type="match status" value="1"/>
</dbReference>
<dbReference type="CDD" id="cd16756">
    <property type="entry name" value="RING-HC_TRIM36_C-I"/>
    <property type="match status" value="1"/>
</dbReference>
<dbReference type="CDD" id="cd12894">
    <property type="entry name" value="SPRY_PRY_TRIM36"/>
    <property type="match status" value="1"/>
</dbReference>
<dbReference type="FunFam" id="2.60.120.920:FF:000029">
    <property type="entry name" value="E3 ubiquitin-protein ligase TRIM36"/>
    <property type="match status" value="1"/>
</dbReference>
<dbReference type="FunFam" id="3.30.40.10:FF:000533">
    <property type="entry name" value="E3 ubiquitin-protein ligase TRIM36"/>
    <property type="match status" value="1"/>
</dbReference>
<dbReference type="FunFam" id="2.60.40.10:FF:000914">
    <property type="entry name" value="E3 ubiquitin-protein ligase Trim36"/>
    <property type="match status" value="1"/>
</dbReference>
<dbReference type="FunFam" id="3.30.160.60:FF:000567">
    <property type="entry name" value="E3 ubiquitin-protein ligase TRIM36 isoform X1"/>
    <property type="match status" value="1"/>
</dbReference>
<dbReference type="FunFam" id="4.10.830.40:FF:000001">
    <property type="entry name" value="E3 ubiquitin-protein ligase TRIM9 isoform X1"/>
    <property type="match status" value="1"/>
</dbReference>
<dbReference type="Gene3D" id="1.20.5.170">
    <property type="match status" value="1"/>
</dbReference>
<dbReference type="Gene3D" id="2.60.120.920">
    <property type="match status" value="1"/>
</dbReference>
<dbReference type="Gene3D" id="4.10.830.40">
    <property type="match status" value="1"/>
</dbReference>
<dbReference type="Gene3D" id="3.30.160.60">
    <property type="entry name" value="Classic Zinc Finger"/>
    <property type="match status" value="1"/>
</dbReference>
<dbReference type="Gene3D" id="2.60.40.10">
    <property type="entry name" value="Immunoglobulins"/>
    <property type="match status" value="1"/>
</dbReference>
<dbReference type="Gene3D" id="3.30.40.10">
    <property type="entry name" value="Zinc/RING finger domain, C3HC4 (zinc finger)"/>
    <property type="match status" value="1"/>
</dbReference>
<dbReference type="InterPro" id="IPR001870">
    <property type="entry name" value="B30.2/SPRY"/>
</dbReference>
<dbReference type="InterPro" id="IPR043136">
    <property type="entry name" value="B30.2/SPRY_sf"/>
</dbReference>
<dbReference type="InterPro" id="IPR003879">
    <property type="entry name" value="Butyrophylin_SPRY"/>
</dbReference>
<dbReference type="InterPro" id="IPR013320">
    <property type="entry name" value="ConA-like_dom_sf"/>
</dbReference>
<dbReference type="InterPro" id="IPR017903">
    <property type="entry name" value="COS_domain"/>
</dbReference>
<dbReference type="InterPro" id="IPR050617">
    <property type="entry name" value="E3_ligase_FN3/SPRY"/>
</dbReference>
<dbReference type="InterPro" id="IPR003961">
    <property type="entry name" value="FN3_dom"/>
</dbReference>
<dbReference type="InterPro" id="IPR036116">
    <property type="entry name" value="FN3_sf"/>
</dbReference>
<dbReference type="InterPro" id="IPR013783">
    <property type="entry name" value="Ig-like_fold"/>
</dbReference>
<dbReference type="InterPro" id="IPR040859">
    <property type="entry name" value="Midline-1_COS"/>
</dbReference>
<dbReference type="InterPro" id="IPR035727">
    <property type="entry name" value="SPRY/PRY_TRIM36"/>
</dbReference>
<dbReference type="InterPro" id="IPR047066">
    <property type="entry name" value="TRIM36_Bbox1_Zfn"/>
</dbReference>
<dbReference type="InterPro" id="IPR047065">
    <property type="entry name" value="TRIM36_Bbox2_Zfn"/>
</dbReference>
<dbReference type="InterPro" id="IPR027726">
    <property type="entry name" value="Trim36_HC-RING"/>
</dbReference>
<dbReference type="InterPro" id="IPR027370">
    <property type="entry name" value="Znf-RING_euk"/>
</dbReference>
<dbReference type="InterPro" id="IPR000315">
    <property type="entry name" value="Znf_B-box"/>
</dbReference>
<dbReference type="InterPro" id="IPR001841">
    <property type="entry name" value="Znf_RING"/>
</dbReference>
<dbReference type="InterPro" id="IPR013083">
    <property type="entry name" value="Znf_RING/FYVE/PHD"/>
</dbReference>
<dbReference type="InterPro" id="IPR017907">
    <property type="entry name" value="Znf_RING_CS"/>
</dbReference>
<dbReference type="PANTHER" id="PTHR24099:SF18">
    <property type="entry name" value="E3 UBIQUITIN-PROTEIN LIGASE TRIM36"/>
    <property type="match status" value="1"/>
</dbReference>
<dbReference type="PANTHER" id="PTHR24099">
    <property type="entry name" value="E3 UBIQUITIN-PROTEIN LIGASE TRIM36-RELATED"/>
    <property type="match status" value="1"/>
</dbReference>
<dbReference type="Pfam" id="PF22586">
    <property type="entry name" value="ANCHR-like_BBOX"/>
    <property type="match status" value="1"/>
</dbReference>
<dbReference type="Pfam" id="PF18568">
    <property type="entry name" value="COS"/>
    <property type="match status" value="1"/>
</dbReference>
<dbReference type="Pfam" id="PF00041">
    <property type="entry name" value="fn3"/>
    <property type="match status" value="1"/>
</dbReference>
<dbReference type="Pfam" id="PF00643">
    <property type="entry name" value="zf-B_box"/>
    <property type="match status" value="1"/>
</dbReference>
<dbReference type="Pfam" id="PF13445">
    <property type="entry name" value="zf-RING_UBOX"/>
    <property type="match status" value="1"/>
</dbReference>
<dbReference type="PRINTS" id="PR01407">
    <property type="entry name" value="BUTYPHLNCDUF"/>
</dbReference>
<dbReference type="SMART" id="SM00336">
    <property type="entry name" value="BBOX"/>
    <property type="match status" value="1"/>
</dbReference>
<dbReference type="SMART" id="SM00184">
    <property type="entry name" value="RING"/>
    <property type="match status" value="1"/>
</dbReference>
<dbReference type="SUPFAM" id="SSF57845">
    <property type="entry name" value="B-box zinc-binding domain"/>
    <property type="match status" value="1"/>
</dbReference>
<dbReference type="SUPFAM" id="SSF49899">
    <property type="entry name" value="Concanavalin A-like lectins/glucanases"/>
    <property type="match status" value="1"/>
</dbReference>
<dbReference type="SUPFAM" id="SSF49265">
    <property type="entry name" value="Fibronectin type III"/>
    <property type="match status" value="1"/>
</dbReference>
<dbReference type="SUPFAM" id="SSF57850">
    <property type="entry name" value="RING/U-box"/>
    <property type="match status" value="1"/>
</dbReference>
<dbReference type="PROSITE" id="PS50188">
    <property type="entry name" value="B302_SPRY"/>
    <property type="match status" value="1"/>
</dbReference>
<dbReference type="PROSITE" id="PS51262">
    <property type="entry name" value="COS"/>
    <property type="match status" value="1"/>
</dbReference>
<dbReference type="PROSITE" id="PS50853">
    <property type="entry name" value="FN3"/>
    <property type="match status" value="1"/>
</dbReference>
<dbReference type="PROSITE" id="PS50119">
    <property type="entry name" value="ZF_BBOX"/>
    <property type="match status" value="1"/>
</dbReference>
<dbReference type="PROSITE" id="PS00518">
    <property type="entry name" value="ZF_RING_1"/>
    <property type="match status" value="1"/>
</dbReference>
<dbReference type="PROSITE" id="PS50089">
    <property type="entry name" value="ZF_RING_2"/>
    <property type="match status" value="1"/>
</dbReference>
<sequence>MSESGEMSEFGYIMELIAKGKVTIKNIERELICPACKELFTHPLILPCQHSICHKCVKELLLTLDDSFNDVGSDNSNQSSPRLRLPSPSMDKIDRINRPGWKRNSLTPRTTVFPCPGCEHDVDLGERGINGLFRNFTLETIVERYRQAARAATAIMCDLCKPPPQESTKSCMDCSASYCNECFKIHHPWGTIKAQHEYVGPTTNFRPKILMCPEHETERINMYCELCRRPVCHLCKLGGNHANHRVTTMSSAYKTLKEKLSKDIDYLIGKESQVKSQISELNLLMKETECNGERAKEEAITHFEKLFEVLEERKSSVLKAIDSSKKLRLDKFQTQMEEYQGLLENNGLVGYAQEVLKETDQSCFVQTAKQLHLRIQKATESLKSFRPAAQTSFEDYVVNTSKQTELLGELSFFSSGIDVPEINEEQSKVYNNALINWHHPEKDKADSYVLEYRKINRDDEMSWNEIEVCGTSKIIQDLENSSTYAFRVRAYKGSICSPCSRELILHTPPAPVFSFLFDEKCGYNNEHLLLNLKRDRVESRAGFNLLLAAERIQVGYYTSLDYIIGDTGITKGKHFWAFRVEPYSYLVKVGVASSDKLQEWLRSPRDAVSPRYEQDSGHDSGSEDACFDSSQPFTLVTIGMQKFFIPKSPTSSNEPENRVLPMPTSIGIFLDCDKGKVDFYDMDQMKCLYERQVDCSHTLYPAFALMGSGGIQLEEPITAKYLEYQEDM</sequence>
<evidence type="ECO:0000250" key="1">
    <source>
        <dbReference type="UniProtKB" id="Q80WG7"/>
    </source>
</evidence>
<evidence type="ECO:0000255" key="2"/>
<evidence type="ECO:0000255" key="3">
    <source>
        <dbReference type="PROSITE-ProRule" id="PRU00024"/>
    </source>
</evidence>
<evidence type="ECO:0000255" key="4">
    <source>
        <dbReference type="PROSITE-ProRule" id="PRU00175"/>
    </source>
</evidence>
<evidence type="ECO:0000255" key="5">
    <source>
        <dbReference type="PROSITE-ProRule" id="PRU00316"/>
    </source>
</evidence>
<evidence type="ECO:0000255" key="6">
    <source>
        <dbReference type="PROSITE-ProRule" id="PRU00548"/>
    </source>
</evidence>
<evidence type="ECO:0000255" key="7">
    <source>
        <dbReference type="PROSITE-ProRule" id="PRU00586"/>
    </source>
</evidence>
<evidence type="ECO:0000269" key="8">
    <source>
    </source>
</evidence>
<evidence type="ECO:0000269" key="9">
    <source>
    </source>
</evidence>
<evidence type="ECO:0000269" key="10">
    <source>
    </source>
</evidence>
<evidence type="ECO:0000269" key="11">
    <source>
    </source>
</evidence>
<evidence type="ECO:0000269" key="12">
    <source ref="5"/>
</evidence>
<evidence type="ECO:0000303" key="13">
    <source>
    </source>
</evidence>
<evidence type="ECO:0000303" key="14">
    <source>
    </source>
</evidence>
<evidence type="ECO:0000303" key="15">
    <source ref="3"/>
</evidence>
<evidence type="ECO:0000305" key="16"/>
<evidence type="ECO:0007829" key="17">
    <source>
        <dbReference type="PDB" id="7QS4"/>
    </source>
</evidence>